<gene>
    <name type="primary">nhr-35</name>
    <name type="ORF">C07A12.3</name>
</gene>
<organism>
    <name type="scientific">Caenorhabditis elegans</name>
    <dbReference type="NCBI Taxonomy" id="6239"/>
    <lineage>
        <taxon>Eukaryota</taxon>
        <taxon>Metazoa</taxon>
        <taxon>Ecdysozoa</taxon>
        <taxon>Nematoda</taxon>
        <taxon>Chromadorea</taxon>
        <taxon>Rhabditida</taxon>
        <taxon>Rhabditina</taxon>
        <taxon>Rhabditomorpha</taxon>
        <taxon>Rhabditoidea</taxon>
        <taxon>Rhabditidae</taxon>
        <taxon>Peloderinae</taxon>
        <taxon>Caenorhabditis</taxon>
    </lineage>
</organism>
<evidence type="ECO:0000255" key="1">
    <source>
        <dbReference type="PROSITE-ProRule" id="PRU00407"/>
    </source>
</evidence>
<evidence type="ECO:0000255" key="2">
    <source>
        <dbReference type="PROSITE-ProRule" id="PRU01189"/>
    </source>
</evidence>
<evidence type="ECO:0000256" key="3">
    <source>
        <dbReference type="SAM" id="MobiDB-lite"/>
    </source>
</evidence>
<evidence type="ECO:0000305" key="4"/>
<protein>
    <recommendedName>
        <fullName>Nuclear hormone receptor family member nhr-35</fullName>
    </recommendedName>
</protein>
<accession>Q17771</accession>
<accession>Q3Y408</accession>
<accession>Q9GTH7</accession>
<proteinExistence type="evidence at transcript level"/>
<keyword id="KW-0025">Alternative splicing</keyword>
<keyword id="KW-0238">DNA-binding</keyword>
<keyword id="KW-0479">Metal-binding</keyword>
<keyword id="KW-0539">Nucleus</keyword>
<keyword id="KW-0675">Receptor</keyword>
<keyword id="KW-1185">Reference proteome</keyword>
<keyword id="KW-0804">Transcription</keyword>
<keyword id="KW-0805">Transcription regulation</keyword>
<keyword id="KW-0862">Zinc</keyword>
<keyword id="KW-0863">Zinc-finger</keyword>
<name>NHR35_CAEEL</name>
<comment type="function">
    <text>Orphan nuclear receptor.</text>
</comment>
<comment type="subcellular location">
    <subcellularLocation>
        <location evidence="1">Nucleus</location>
    </subcellularLocation>
</comment>
<comment type="alternative products">
    <event type="alternative splicing"/>
    <isoform>
        <id>Q17771-1</id>
        <name>a</name>
        <sequence type="displayed"/>
    </isoform>
    <isoform>
        <id>Q17771-2</id>
        <name>b</name>
        <sequence type="described" ref="VSP_020160"/>
    </isoform>
</comment>
<comment type="similarity">
    <text evidence="4">Belongs to the nuclear hormone receptor family.</text>
</comment>
<feature type="chain" id="PRO_0000053778" description="Nuclear hormone receptor family member nhr-35">
    <location>
        <begin position="1"/>
        <end position="542"/>
    </location>
</feature>
<feature type="domain" description="NR LBD" evidence="2">
    <location>
        <begin position="186"/>
        <end position="438"/>
    </location>
</feature>
<feature type="DNA-binding region" description="Nuclear receptor" evidence="1">
    <location>
        <begin position="74"/>
        <end position="149"/>
    </location>
</feature>
<feature type="zinc finger region" description="NR C4-type" evidence="1">
    <location>
        <begin position="77"/>
        <end position="97"/>
    </location>
</feature>
<feature type="zinc finger region" description="NR C4-type" evidence="1">
    <location>
        <begin position="113"/>
        <end position="137"/>
    </location>
</feature>
<feature type="region of interest" description="Disordered" evidence="3">
    <location>
        <begin position="445"/>
        <end position="487"/>
    </location>
</feature>
<feature type="compositionally biased region" description="Polar residues" evidence="3">
    <location>
        <begin position="448"/>
        <end position="464"/>
    </location>
</feature>
<feature type="compositionally biased region" description="Low complexity" evidence="3">
    <location>
        <begin position="475"/>
        <end position="487"/>
    </location>
</feature>
<feature type="splice variant" id="VSP_020160" description="In isoform b." evidence="4">
    <location>
        <begin position="1"/>
        <end position="56"/>
    </location>
</feature>
<reference key="1">
    <citation type="journal article" date="1998" name="Science">
        <title>Genome sequence of the nematode C. elegans: a platform for investigating biology.</title>
        <authorList>
            <consortium name="The C. elegans sequencing consortium"/>
        </authorList>
    </citation>
    <scope>NUCLEOTIDE SEQUENCE [LARGE SCALE GENOMIC DNA]</scope>
    <scope>ALTERNATIVE SPLICING</scope>
    <source>
        <strain>Bristol N2</strain>
    </source>
</reference>
<reference key="2">
    <citation type="journal article" date="2005" name="J. Mol. Evol.">
        <title>Explosive lineage-specific expansion of the orphan nuclear receptor HNF4 in nematodes.</title>
        <authorList>
            <person name="Robinson-Rechavi M."/>
            <person name="Maina C.V."/>
            <person name="Gissendanner C.R."/>
            <person name="Laudet V."/>
            <person name="Sluder A."/>
        </authorList>
    </citation>
    <scope>NUCLEOTIDE SEQUENCE [MRNA] OF 35-542 (ISOFORM A)</scope>
</reference>
<dbReference type="EMBL" id="FO080373">
    <property type="protein sequence ID" value="CCD63275.1"/>
    <property type="molecule type" value="Genomic_DNA"/>
</dbReference>
<dbReference type="EMBL" id="FO080373">
    <property type="protein sequence ID" value="CCD63276.1"/>
    <property type="molecule type" value="Genomic_DNA"/>
</dbReference>
<dbReference type="EMBL" id="AF273781">
    <property type="protein sequence ID" value="AAG15130.1"/>
    <property type="molecule type" value="mRNA"/>
</dbReference>
<dbReference type="RefSeq" id="NP_001024365.1">
    <molecule id="Q17771-1"/>
    <property type="nucleotide sequence ID" value="NM_001029194.4"/>
</dbReference>
<dbReference type="RefSeq" id="NP_001024366.1">
    <property type="nucleotide sequence ID" value="NM_001029195.3"/>
</dbReference>
<dbReference type="RefSeq" id="NP_001379629.1">
    <molecule id="Q17771-2"/>
    <property type="nucleotide sequence ID" value="NM_001392764.1"/>
</dbReference>
<dbReference type="SMR" id="Q17771"/>
<dbReference type="BioGRID" id="45660">
    <property type="interactions" value="3"/>
</dbReference>
<dbReference type="FunCoup" id="Q17771">
    <property type="interactions" value="919"/>
</dbReference>
<dbReference type="STRING" id="6239.C07A12.3a.1"/>
<dbReference type="iPTMnet" id="Q17771"/>
<dbReference type="PaxDb" id="6239-C07A12.3a"/>
<dbReference type="PeptideAtlas" id="Q17771"/>
<dbReference type="EnsemblMetazoa" id="C07A12.3a.1">
    <molecule id="Q17771-1"/>
    <property type="protein sequence ID" value="C07A12.3a.1"/>
    <property type="gene ID" value="WBGene00003628"/>
</dbReference>
<dbReference type="EnsemblMetazoa" id="C07A12.3b.1">
    <molecule id="Q17771-2"/>
    <property type="protein sequence ID" value="C07A12.3b.1"/>
    <property type="gene ID" value="WBGene00003628"/>
</dbReference>
<dbReference type="GeneID" id="180725"/>
<dbReference type="KEGG" id="cel:CELE_C07A12.3"/>
<dbReference type="UCSC" id="C07A12.3a.2">
    <molecule id="Q17771-1"/>
    <property type="organism name" value="c. elegans"/>
</dbReference>
<dbReference type="AGR" id="WB:WBGene00003628"/>
<dbReference type="CTD" id="180725"/>
<dbReference type="WormBase" id="C07A12.3a">
    <molecule id="Q17771-1"/>
    <property type="protein sequence ID" value="CE30855"/>
    <property type="gene ID" value="WBGene00003628"/>
    <property type="gene designation" value="nhr-35"/>
</dbReference>
<dbReference type="WormBase" id="C07A12.3b">
    <molecule id="Q17771-2"/>
    <property type="protein sequence ID" value="CE38483"/>
    <property type="gene ID" value="WBGene00003628"/>
    <property type="gene designation" value="nhr-35"/>
</dbReference>
<dbReference type="eggNOG" id="KOG3575">
    <property type="taxonomic scope" value="Eukaryota"/>
</dbReference>
<dbReference type="GeneTree" id="ENSGT00940000167734"/>
<dbReference type="InParanoid" id="Q17771"/>
<dbReference type="OMA" id="YGAIACN"/>
<dbReference type="OrthoDB" id="5771769at2759"/>
<dbReference type="PhylomeDB" id="Q17771"/>
<dbReference type="Reactome" id="R-CEL-383280">
    <property type="pathway name" value="Nuclear Receptor transcription pathway"/>
</dbReference>
<dbReference type="PRO" id="PR:Q17771"/>
<dbReference type="Proteomes" id="UP000001940">
    <property type="component" value="Chromosome X"/>
</dbReference>
<dbReference type="Bgee" id="WBGene00003628">
    <property type="expression patterns" value="Expressed in pharyngeal muscle cell (C elegans) and 3 other cell types or tissues"/>
</dbReference>
<dbReference type="GO" id="GO:0005634">
    <property type="term" value="C:nucleus"/>
    <property type="evidence" value="ECO:0007669"/>
    <property type="project" value="UniProtKB-SubCell"/>
</dbReference>
<dbReference type="GO" id="GO:0004879">
    <property type="term" value="F:nuclear receptor activity"/>
    <property type="evidence" value="ECO:0000318"/>
    <property type="project" value="GO_Central"/>
</dbReference>
<dbReference type="GO" id="GO:0000978">
    <property type="term" value="F:RNA polymerase II cis-regulatory region sequence-specific DNA binding"/>
    <property type="evidence" value="ECO:0000318"/>
    <property type="project" value="GO_Central"/>
</dbReference>
<dbReference type="GO" id="GO:0008270">
    <property type="term" value="F:zinc ion binding"/>
    <property type="evidence" value="ECO:0007669"/>
    <property type="project" value="UniProtKB-KW"/>
</dbReference>
<dbReference type="GO" id="GO:0030154">
    <property type="term" value="P:cell differentiation"/>
    <property type="evidence" value="ECO:0000318"/>
    <property type="project" value="GO_Central"/>
</dbReference>
<dbReference type="GO" id="GO:0006357">
    <property type="term" value="P:regulation of transcription by RNA polymerase II"/>
    <property type="evidence" value="ECO:0000318"/>
    <property type="project" value="GO_Central"/>
</dbReference>
<dbReference type="CDD" id="cd06960">
    <property type="entry name" value="NR_DBD_HNF4A"/>
    <property type="match status" value="1"/>
</dbReference>
<dbReference type="FunFam" id="3.30.50.10:FF:000030">
    <property type="entry name" value="Nuclear Hormone Receptor family"/>
    <property type="match status" value="1"/>
</dbReference>
<dbReference type="FunFam" id="1.10.565.10:FF:000048">
    <property type="entry name" value="Nuclear hormone receptor family member nhr-35"/>
    <property type="match status" value="1"/>
</dbReference>
<dbReference type="Gene3D" id="3.30.50.10">
    <property type="entry name" value="Erythroid Transcription Factor GATA-1, subunit A"/>
    <property type="match status" value="1"/>
</dbReference>
<dbReference type="Gene3D" id="1.10.565.10">
    <property type="entry name" value="Retinoid X Receptor"/>
    <property type="match status" value="1"/>
</dbReference>
<dbReference type="InterPro" id="IPR049636">
    <property type="entry name" value="HNF4-like_DBD"/>
</dbReference>
<dbReference type="InterPro" id="IPR035500">
    <property type="entry name" value="NHR-like_dom_sf"/>
</dbReference>
<dbReference type="InterPro" id="IPR016355">
    <property type="entry name" value="NR5-like"/>
</dbReference>
<dbReference type="InterPro" id="IPR000536">
    <property type="entry name" value="Nucl_hrmn_rcpt_lig-bd"/>
</dbReference>
<dbReference type="InterPro" id="IPR050274">
    <property type="entry name" value="Nuclear_hormone_rcpt_NR2"/>
</dbReference>
<dbReference type="InterPro" id="IPR001723">
    <property type="entry name" value="Nuclear_hrmn_rcpt"/>
</dbReference>
<dbReference type="InterPro" id="IPR001628">
    <property type="entry name" value="Znf_hrmn_rcpt"/>
</dbReference>
<dbReference type="InterPro" id="IPR013088">
    <property type="entry name" value="Znf_NHR/GATA"/>
</dbReference>
<dbReference type="PANTHER" id="PTHR24083">
    <property type="entry name" value="NUCLEAR HORMONE RECEPTOR"/>
    <property type="match status" value="1"/>
</dbReference>
<dbReference type="Pfam" id="PF00104">
    <property type="entry name" value="Hormone_recep"/>
    <property type="match status" value="1"/>
</dbReference>
<dbReference type="Pfam" id="PF00105">
    <property type="entry name" value="zf-C4"/>
    <property type="match status" value="1"/>
</dbReference>
<dbReference type="PIRSF" id="PIRSF002530">
    <property type="entry name" value="Nuc_orph_FTZ-F1"/>
    <property type="match status" value="1"/>
</dbReference>
<dbReference type="PRINTS" id="PR00398">
    <property type="entry name" value="STRDHORMONER"/>
</dbReference>
<dbReference type="PRINTS" id="PR00047">
    <property type="entry name" value="STROIDFINGER"/>
</dbReference>
<dbReference type="SMART" id="SM00430">
    <property type="entry name" value="HOLI"/>
    <property type="match status" value="1"/>
</dbReference>
<dbReference type="SMART" id="SM00399">
    <property type="entry name" value="ZnF_C4"/>
    <property type="match status" value="1"/>
</dbReference>
<dbReference type="SUPFAM" id="SSF57716">
    <property type="entry name" value="Glucocorticoid receptor-like (DNA-binding domain)"/>
    <property type="match status" value="1"/>
</dbReference>
<dbReference type="SUPFAM" id="SSF48508">
    <property type="entry name" value="Nuclear receptor ligand-binding domain"/>
    <property type="match status" value="1"/>
</dbReference>
<dbReference type="PROSITE" id="PS51843">
    <property type="entry name" value="NR_LBD"/>
    <property type="match status" value="1"/>
</dbReference>
<dbReference type="PROSITE" id="PS00031">
    <property type="entry name" value="NUCLEAR_REC_DBD_1"/>
    <property type="match status" value="1"/>
</dbReference>
<dbReference type="PROSITE" id="PS51030">
    <property type="entry name" value="NUCLEAR_REC_DBD_2"/>
    <property type="match status" value="1"/>
</dbReference>
<sequence>MGNKIHAGFTFTPSHARSLDCFVCLLVLFSFRSTPPHGRHPAIEPTLLISHYYRGQMLGTYNGDSKAETDGKDNSICHICSDVATGRHYGAIACNGCKGFFRRTVRRNYEYHCRFESKCEIDKHNRAVCRYCRFMKCISSGMRDDQVQSERDVIGKREKKDNMKTYCQDPTPRTSPELTMSPVEDEYDQLLESLLKSEMTIQSLRDTVITQTGNVEYTTKSKNRLSHTDRTATLNDVLKSMHSQLLLVIEWAKTLPEFKQLSGADQAVLLKNFAGQHVTLCVAYRSVGANDALKLLNDLYIPRASKTTPHLKEYVDGFYLRDCEKVMDQLVEPMRFLKLDNKEFVALKACVLFNPVAPGLSNHAVNLVLNARRKIFAAFEKYVRVNKPLETTRVGDLTFFILTPLSVLSKSISEDIMFTKVSGVARIDVLMEELILAETDYGEDRQDQTPCSIMNDTPSGSQDMCSPCPEDLLRTSTSSNSPTNSSLTAGLLLKTDDAMMSGIGTQYTTPQPHTPQFADSSHLNLPYAPFTSSYNQYPNTYS</sequence>